<organism>
    <name type="scientific">Phenylobacterium zucineum (strain HLK1)</name>
    <dbReference type="NCBI Taxonomy" id="450851"/>
    <lineage>
        <taxon>Bacteria</taxon>
        <taxon>Pseudomonadati</taxon>
        <taxon>Pseudomonadota</taxon>
        <taxon>Alphaproteobacteria</taxon>
        <taxon>Caulobacterales</taxon>
        <taxon>Caulobacteraceae</taxon>
        <taxon>Phenylobacterium</taxon>
    </lineage>
</organism>
<accession>B4RFS3</accession>
<proteinExistence type="inferred from homology"/>
<feature type="chain" id="PRO_1000090654" description="Phospho-N-acetylmuramoyl-pentapeptide-transferase">
    <location>
        <begin position="1"/>
        <end position="369"/>
    </location>
</feature>
<feature type="transmembrane region" description="Helical" evidence="1">
    <location>
        <begin position="30"/>
        <end position="50"/>
    </location>
</feature>
<feature type="transmembrane region" description="Helical" evidence="1">
    <location>
        <begin position="74"/>
        <end position="94"/>
    </location>
</feature>
<feature type="transmembrane region" description="Helical" evidence="1">
    <location>
        <begin position="97"/>
        <end position="117"/>
    </location>
</feature>
<feature type="transmembrane region" description="Helical" evidence="1">
    <location>
        <begin position="136"/>
        <end position="156"/>
    </location>
</feature>
<feature type="transmembrane region" description="Helical" evidence="1">
    <location>
        <begin position="177"/>
        <end position="197"/>
    </location>
</feature>
<feature type="transmembrane region" description="Helical" evidence="1">
    <location>
        <begin position="208"/>
        <end position="228"/>
    </location>
</feature>
<feature type="transmembrane region" description="Helical" evidence="1">
    <location>
        <begin position="244"/>
        <end position="264"/>
    </location>
</feature>
<feature type="transmembrane region" description="Helical" evidence="1">
    <location>
        <begin position="272"/>
        <end position="292"/>
    </location>
</feature>
<feature type="transmembrane region" description="Helical" evidence="1">
    <location>
        <begin position="297"/>
        <end position="317"/>
    </location>
</feature>
<feature type="transmembrane region" description="Helical" evidence="1">
    <location>
        <begin position="346"/>
        <end position="366"/>
    </location>
</feature>
<protein>
    <recommendedName>
        <fullName evidence="1">Phospho-N-acetylmuramoyl-pentapeptide-transferase</fullName>
        <ecNumber evidence="1">2.7.8.13</ecNumber>
    </recommendedName>
    <alternativeName>
        <fullName evidence="1">UDP-MurNAc-pentapeptide phosphotransferase</fullName>
    </alternativeName>
</protein>
<comment type="function">
    <text evidence="1">Catalyzes the initial step of the lipid cycle reactions in the biosynthesis of the cell wall peptidoglycan: transfers peptidoglycan precursor phospho-MurNAc-pentapeptide from UDP-MurNAc-pentapeptide onto the lipid carrier undecaprenyl phosphate, yielding undecaprenyl-pyrophosphoryl-MurNAc-pentapeptide, known as lipid I.</text>
</comment>
<comment type="catalytic activity">
    <reaction evidence="1">
        <text>UDP-N-acetyl-alpha-D-muramoyl-L-alanyl-gamma-D-glutamyl-meso-2,6-diaminopimeloyl-D-alanyl-D-alanine + di-trans,octa-cis-undecaprenyl phosphate = di-trans,octa-cis-undecaprenyl diphospho-N-acetyl-alpha-D-muramoyl-L-alanyl-D-glutamyl-meso-2,6-diaminopimeloyl-D-alanyl-D-alanine + UMP</text>
        <dbReference type="Rhea" id="RHEA:28386"/>
        <dbReference type="ChEBI" id="CHEBI:57865"/>
        <dbReference type="ChEBI" id="CHEBI:60392"/>
        <dbReference type="ChEBI" id="CHEBI:61386"/>
        <dbReference type="ChEBI" id="CHEBI:61387"/>
        <dbReference type="EC" id="2.7.8.13"/>
    </reaction>
</comment>
<comment type="cofactor">
    <cofactor evidence="1">
        <name>Mg(2+)</name>
        <dbReference type="ChEBI" id="CHEBI:18420"/>
    </cofactor>
</comment>
<comment type="pathway">
    <text evidence="1">Cell wall biogenesis; peptidoglycan biosynthesis.</text>
</comment>
<comment type="subcellular location">
    <subcellularLocation>
        <location evidence="1">Cell inner membrane</location>
        <topology evidence="1">Multi-pass membrane protein</topology>
    </subcellularLocation>
</comment>
<comment type="similarity">
    <text evidence="1">Belongs to the glycosyltransferase 4 family. MraY subfamily.</text>
</comment>
<dbReference type="EC" id="2.7.8.13" evidence="1"/>
<dbReference type="EMBL" id="CP000747">
    <property type="protein sequence ID" value="ACG78736.1"/>
    <property type="molecule type" value="Genomic_DNA"/>
</dbReference>
<dbReference type="RefSeq" id="WP_012522877.1">
    <property type="nucleotide sequence ID" value="NC_011144.1"/>
</dbReference>
<dbReference type="SMR" id="B4RFS3"/>
<dbReference type="STRING" id="450851.PHZ_c2326"/>
<dbReference type="KEGG" id="pzu:PHZ_c2326"/>
<dbReference type="eggNOG" id="COG0472">
    <property type="taxonomic scope" value="Bacteria"/>
</dbReference>
<dbReference type="HOGENOM" id="CLU_023982_0_0_5"/>
<dbReference type="OrthoDB" id="9805475at2"/>
<dbReference type="UniPathway" id="UPA00219"/>
<dbReference type="Proteomes" id="UP000001868">
    <property type="component" value="Chromosome"/>
</dbReference>
<dbReference type="GO" id="GO:0005886">
    <property type="term" value="C:plasma membrane"/>
    <property type="evidence" value="ECO:0007669"/>
    <property type="project" value="UniProtKB-SubCell"/>
</dbReference>
<dbReference type="GO" id="GO:0046872">
    <property type="term" value="F:metal ion binding"/>
    <property type="evidence" value="ECO:0007669"/>
    <property type="project" value="UniProtKB-KW"/>
</dbReference>
<dbReference type="GO" id="GO:0008963">
    <property type="term" value="F:phospho-N-acetylmuramoyl-pentapeptide-transferase activity"/>
    <property type="evidence" value="ECO:0007669"/>
    <property type="project" value="UniProtKB-UniRule"/>
</dbReference>
<dbReference type="GO" id="GO:0051992">
    <property type="term" value="F:UDP-N-acetylmuramoyl-L-alanyl-D-glutamyl-meso-2,6-diaminopimelyl-D-alanyl-D-alanine:undecaprenyl-phosphate transferase activity"/>
    <property type="evidence" value="ECO:0007669"/>
    <property type="project" value="RHEA"/>
</dbReference>
<dbReference type="GO" id="GO:0051301">
    <property type="term" value="P:cell division"/>
    <property type="evidence" value="ECO:0007669"/>
    <property type="project" value="UniProtKB-KW"/>
</dbReference>
<dbReference type="GO" id="GO:0071555">
    <property type="term" value="P:cell wall organization"/>
    <property type="evidence" value="ECO:0007669"/>
    <property type="project" value="UniProtKB-KW"/>
</dbReference>
<dbReference type="GO" id="GO:0009252">
    <property type="term" value="P:peptidoglycan biosynthetic process"/>
    <property type="evidence" value="ECO:0007669"/>
    <property type="project" value="UniProtKB-UniRule"/>
</dbReference>
<dbReference type="GO" id="GO:0008360">
    <property type="term" value="P:regulation of cell shape"/>
    <property type="evidence" value="ECO:0007669"/>
    <property type="project" value="UniProtKB-KW"/>
</dbReference>
<dbReference type="CDD" id="cd06852">
    <property type="entry name" value="GT_MraY"/>
    <property type="match status" value="1"/>
</dbReference>
<dbReference type="HAMAP" id="MF_00038">
    <property type="entry name" value="MraY"/>
    <property type="match status" value="1"/>
</dbReference>
<dbReference type="InterPro" id="IPR000715">
    <property type="entry name" value="Glycosyl_transferase_4"/>
</dbReference>
<dbReference type="InterPro" id="IPR003524">
    <property type="entry name" value="PNAcMuramoyl-5peptid_Trfase"/>
</dbReference>
<dbReference type="InterPro" id="IPR018480">
    <property type="entry name" value="PNAcMuramoyl-5peptid_Trfase_CS"/>
</dbReference>
<dbReference type="NCBIfam" id="TIGR00445">
    <property type="entry name" value="mraY"/>
    <property type="match status" value="1"/>
</dbReference>
<dbReference type="PANTHER" id="PTHR22926">
    <property type="entry name" value="PHOSPHO-N-ACETYLMURAMOYL-PENTAPEPTIDE-TRANSFERASE"/>
    <property type="match status" value="1"/>
</dbReference>
<dbReference type="PANTHER" id="PTHR22926:SF5">
    <property type="entry name" value="PHOSPHO-N-ACETYLMURAMOYL-PENTAPEPTIDE-TRANSFERASE HOMOLOG"/>
    <property type="match status" value="1"/>
</dbReference>
<dbReference type="Pfam" id="PF00953">
    <property type="entry name" value="Glycos_transf_4"/>
    <property type="match status" value="1"/>
</dbReference>
<dbReference type="Pfam" id="PF10555">
    <property type="entry name" value="MraY_sig1"/>
    <property type="match status" value="1"/>
</dbReference>
<dbReference type="PROSITE" id="PS01347">
    <property type="entry name" value="MRAY_1"/>
    <property type="match status" value="1"/>
</dbReference>
<dbReference type="PROSITE" id="PS01348">
    <property type="entry name" value="MRAY_2"/>
    <property type="match status" value="1"/>
</dbReference>
<reference key="1">
    <citation type="journal article" date="2008" name="BMC Genomics">
        <title>Complete genome of Phenylobacterium zucineum - a novel facultative intracellular bacterium isolated from human erythroleukemia cell line K562.</title>
        <authorList>
            <person name="Luo Y."/>
            <person name="Xu X."/>
            <person name="Ding Z."/>
            <person name="Liu Z."/>
            <person name="Zhang B."/>
            <person name="Yan Z."/>
            <person name="Sun J."/>
            <person name="Hu S."/>
            <person name="Hu X."/>
        </authorList>
    </citation>
    <scope>NUCLEOTIDE SEQUENCE [LARGE SCALE GENOMIC DNA]</scope>
    <source>
        <strain>HLK1</strain>
    </source>
</reference>
<keyword id="KW-0131">Cell cycle</keyword>
<keyword id="KW-0132">Cell division</keyword>
<keyword id="KW-0997">Cell inner membrane</keyword>
<keyword id="KW-1003">Cell membrane</keyword>
<keyword id="KW-0133">Cell shape</keyword>
<keyword id="KW-0961">Cell wall biogenesis/degradation</keyword>
<keyword id="KW-0460">Magnesium</keyword>
<keyword id="KW-0472">Membrane</keyword>
<keyword id="KW-0479">Metal-binding</keyword>
<keyword id="KW-0573">Peptidoglycan synthesis</keyword>
<keyword id="KW-1185">Reference proteome</keyword>
<keyword id="KW-0808">Transferase</keyword>
<keyword id="KW-0812">Transmembrane</keyword>
<keyword id="KW-1133">Transmembrane helix</keyword>
<sequence length="369" mass="40011">MFYWLYEQFAASGYVPILNLLKYQTFRTGLAIFTAQFVVVAMGSRFIRWMQAKQGKGQPIRAEGIERHVIEKAGTPTMGGVMILAGLLVGTLLWSDLSNPYVWAVVLVTAGYGLLGFTDDYAKVTRQTTAGVSGKIRLALEAFIAMAAVLIIIVFAQKPPENPELLTSVTFPIFKQYFVDLSWGYLLFGAFIIVGAANAVNFTDGLDGLATVPVMIAAAAYGLIAYLVGNYVFSNYLQLHFVPGVGEIAVFCGALIGSGLGFLWYNAPPAKIFMGDTGSLALGGAVGAVAVATRHEIVLAIIGGLFVAETLSVIIQVAWFKRTGRRIFLMAPIHHHFEKLGWSESTVVIRFWIVAIMLALVGLATLKLR</sequence>
<name>MRAY_PHEZH</name>
<gene>
    <name evidence="1" type="primary">mraY</name>
    <name type="ordered locus">PHZ_c2326</name>
</gene>
<evidence type="ECO:0000255" key="1">
    <source>
        <dbReference type="HAMAP-Rule" id="MF_00038"/>
    </source>
</evidence>